<sequence length="426" mass="47987">MKLQKPKGTQDILPVAAAKWQYVEDVARETFKQYHYGEIRTPMFEHYEVISRSVGDTTDIVTKEMYDFYDKGDRHITLRPEGTAPVVRSYVENKLFAPEVQKPVKLYYIGSMFRYERPQVGRSREFHQIGVECFGSANPATDVETIAMAYHLFERLGIKGVTLHLNSLGNAASRAAYRQALIDYLSPMRETLSKDSQRRLDENPLRVLDSKEKEDKIAVANAPSILDYLDEDSQAHFDAVRSMLEALAIPYVIDTNMVRGLDYYNHTIFEFITEVNQSELTICAGGRYDGLVEYFGGPATPGFGFGLGLERLLLILDKQGVELPVEEGLDVYIAVLGADANVAALALTQAIRRQGFTVERDYLGRKIKAQFKSADTFKAKVVITLGESEIKAGQAVLKHNQTRQEMTVSFDQIQTDFASIFAECVQ</sequence>
<gene>
    <name evidence="1" type="primary">hisS</name>
    <name type="ordered locus">SZO_18830</name>
</gene>
<protein>
    <recommendedName>
        <fullName evidence="1">Histidine--tRNA ligase</fullName>
        <ecNumber evidence="1">6.1.1.21</ecNumber>
    </recommendedName>
    <alternativeName>
        <fullName evidence="1">Histidyl-tRNA synthetase</fullName>
        <shortName evidence="1">HisRS</shortName>
    </alternativeName>
</protein>
<keyword id="KW-0030">Aminoacyl-tRNA synthetase</keyword>
<keyword id="KW-0067">ATP-binding</keyword>
<keyword id="KW-0963">Cytoplasm</keyword>
<keyword id="KW-0436">Ligase</keyword>
<keyword id="KW-0547">Nucleotide-binding</keyword>
<keyword id="KW-0648">Protein biosynthesis</keyword>
<evidence type="ECO:0000255" key="1">
    <source>
        <dbReference type="HAMAP-Rule" id="MF_00127"/>
    </source>
</evidence>
<dbReference type="EC" id="6.1.1.21" evidence="1"/>
<dbReference type="EMBL" id="FM204884">
    <property type="protein sequence ID" value="CAX00828.1"/>
    <property type="molecule type" value="Genomic_DNA"/>
</dbReference>
<dbReference type="SMR" id="C0MGD4"/>
<dbReference type="KEGG" id="seq:SZO_18830"/>
<dbReference type="PATRIC" id="fig|40041.11.peg.2021"/>
<dbReference type="eggNOG" id="COG0124">
    <property type="taxonomic scope" value="Bacteria"/>
</dbReference>
<dbReference type="HOGENOM" id="CLU_025113_1_1_9"/>
<dbReference type="Proteomes" id="UP000001368">
    <property type="component" value="Chromosome"/>
</dbReference>
<dbReference type="GO" id="GO:0005737">
    <property type="term" value="C:cytoplasm"/>
    <property type="evidence" value="ECO:0007669"/>
    <property type="project" value="UniProtKB-SubCell"/>
</dbReference>
<dbReference type="GO" id="GO:0005524">
    <property type="term" value="F:ATP binding"/>
    <property type="evidence" value="ECO:0007669"/>
    <property type="project" value="UniProtKB-UniRule"/>
</dbReference>
<dbReference type="GO" id="GO:0140096">
    <property type="term" value="F:catalytic activity, acting on a protein"/>
    <property type="evidence" value="ECO:0007669"/>
    <property type="project" value="UniProtKB-ARBA"/>
</dbReference>
<dbReference type="GO" id="GO:0004821">
    <property type="term" value="F:histidine-tRNA ligase activity"/>
    <property type="evidence" value="ECO:0007669"/>
    <property type="project" value="UniProtKB-UniRule"/>
</dbReference>
<dbReference type="GO" id="GO:0016740">
    <property type="term" value="F:transferase activity"/>
    <property type="evidence" value="ECO:0007669"/>
    <property type="project" value="UniProtKB-ARBA"/>
</dbReference>
<dbReference type="GO" id="GO:0006427">
    <property type="term" value="P:histidyl-tRNA aminoacylation"/>
    <property type="evidence" value="ECO:0007669"/>
    <property type="project" value="UniProtKB-UniRule"/>
</dbReference>
<dbReference type="CDD" id="cd00773">
    <property type="entry name" value="HisRS-like_core"/>
    <property type="match status" value="1"/>
</dbReference>
<dbReference type="CDD" id="cd00859">
    <property type="entry name" value="HisRS_anticodon"/>
    <property type="match status" value="1"/>
</dbReference>
<dbReference type="FunFam" id="3.30.930.10:FF:000005">
    <property type="entry name" value="Histidine--tRNA ligase"/>
    <property type="match status" value="1"/>
</dbReference>
<dbReference type="Gene3D" id="3.40.50.800">
    <property type="entry name" value="Anticodon-binding domain"/>
    <property type="match status" value="1"/>
</dbReference>
<dbReference type="Gene3D" id="3.30.930.10">
    <property type="entry name" value="Bira Bifunctional Protein, Domain 2"/>
    <property type="match status" value="1"/>
</dbReference>
<dbReference type="HAMAP" id="MF_00127">
    <property type="entry name" value="His_tRNA_synth"/>
    <property type="match status" value="1"/>
</dbReference>
<dbReference type="InterPro" id="IPR006195">
    <property type="entry name" value="aa-tRNA-synth_II"/>
</dbReference>
<dbReference type="InterPro" id="IPR045864">
    <property type="entry name" value="aa-tRNA-synth_II/BPL/LPL"/>
</dbReference>
<dbReference type="InterPro" id="IPR004154">
    <property type="entry name" value="Anticodon-bd"/>
</dbReference>
<dbReference type="InterPro" id="IPR036621">
    <property type="entry name" value="Anticodon-bd_dom_sf"/>
</dbReference>
<dbReference type="InterPro" id="IPR015807">
    <property type="entry name" value="His-tRNA-ligase"/>
</dbReference>
<dbReference type="InterPro" id="IPR041715">
    <property type="entry name" value="HisRS-like_core"/>
</dbReference>
<dbReference type="InterPro" id="IPR004516">
    <property type="entry name" value="HisRS/HisZ"/>
</dbReference>
<dbReference type="InterPro" id="IPR033656">
    <property type="entry name" value="HisRS_anticodon"/>
</dbReference>
<dbReference type="NCBIfam" id="TIGR00442">
    <property type="entry name" value="hisS"/>
    <property type="match status" value="1"/>
</dbReference>
<dbReference type="PANTHER" id="PTHR43707:SF1">
    <property type="entry name" value="HISTIDINE--TRNA LIGASE, MITOCHONDRIAL-RELATED"/>
    <property type="match status" value="1"/>
</dbReference>
<dbReference type="PANTHER" id="PTHR43707">
    <property type="entry name" value="HISTIDYL-TRNA SYNTHETASE"/>
    <property type="match status" value="1"/>
</dbReference>
<dbReference type="Pfam" id="PF03129">
    <property type="entry name" value="HGTP_anticodon"/>
    <property type="match status" value="1"/>
</dbReference>
<dbReference type="Pfam" id="PF13393">
    <property type="entry name" value="tRNA-synt_His"/>
    <property type="match status" value="1"/>
</dbReference>
<dbReference type="PIRSF" id="PIRSF001549">
    <property type="entry name" value="His-tRNA_synth"/>
    <property type="match status" value="1"/>
</dbReference>
<dbReference type="SUPFAM" id="SSF52954">
    <property type="entry name" value="Class II aaRS ABD-related"/>
    <property type="match status" value="1"/>
</dbReference>
<dbReference type="SUPFAM" id="SSF55681">
    <property type="entry name" value="Class II aaRS and biotin synthetases"/>
    <property type="match status" value="1"/>
</dbReference>
<dbReference type="PROSITE" id="PS50862">
    <property type="entry name" value="AA_TRNA_LIGASE_II"/>
    <property type="match status" value="1"/>
</dbReference>
<organism>
    <name type="scientific">Streptococcus equi subsp. zooepidemicus (strain H70)</name>
    <dbReference type="NCBI Taxonomy" id="553483"/>
    <lineage>
        <taxon>Bacteria</taxon>
        <taxon>Bacillati</taxon>
        <taxon>Bacillota</taxon>
        <taxon>Bacilli</taxon>
        <taxon>Lactobacillales</taxon>
        <taxon>Streptococcaceae</taxon>
        <taxon>Streptococcus</taxon>
    </lineage>
</organism>
<proteinExistence type="inferred from homology"/>
<name>SYH_STRS7</name>
<reference key="1">
    <citation type="journal article" date="2009" name="PLoS Pathog.">
        <title>Genomic evidence for the evolution of Streptococcus equi: host restriction, increased virulence, and genetic exchange with human pathogens.</title>
        <authorList>
            <person name="Holden M.T.G."/>
            <person name="Heather Z."/>
            <person name="Paillot R."/>
            <person name="Steward K.F."/>
            <person name="Webb K."/>
            <person name="Ainslie F."/>
            <person name="Jourdan T."/>
            <person name="Bason N.C."/>
            <person name="Holroyd N.E."/>
            <person name="Mungall K."/>
            <person name="Quail M.A."/>
            <person name="Sanders M."/>
            <person name="Simmonds M."/>
            <person name="Willey D."/>
            <person name="Brooks K."/>
            <person name="Aanensen D.M."/>
            <person name="Spratt B.G."/>
            <person name="Jolley K.A."/>
            <person name="Maiden M.C.J."/>
            <person name="Kehoe M."/>
            <person name="Chanter N."/>
            <person name="Bentley S.D."/>
            <person name="Robinson C."/>
            <person name="Maskell D.J."/>
            <person name="Parkhill J."/>
            <person name="Waller A.S."/>
        </authorList>
    </citation>
    <scope>NUCLEOTIDE SEQUENCE [LARGE SCALE GENOMIC DNA]</scope>
    <source>
        <strain>H70</strain>
    </source>
</reference>
<feature type="chain" id="PRO_1000203147" description="Histidine--tRNA ligase">
    <location>
        <begin position="1"/>
        <end position="426"/>
    </location>
</feature>
<comment type="catalytic activity">
    <reaction evidence="1">
        <text>tRNA(His) + L-histidine + ATP = L-histidyl-tRNA(His) + AMP + diphosphate + H(+)</text>
        <dbReference type="Rhea" id="RHEA:17313"/>
        <dbReference type="Rhea" id="RHEA-COMP:9665"/>
        <dbReference type="Rhea" id="RHEA-COMP:9689"/>
        <dbReference type="ChEBI" id="CHEBI:15378"/>
        <dbReference type="ChEBI" id="CHEBI:30616"/>
        <dbReference type="ChEBI" id="CHEBI:33019"/>
        <dbReference type="ChEBI" id="CHEBI:57595"/>
        <dbReference type="ChEBI" id="CHEBI:78442"/>
        <dbReference type="ChEBI" id="CHEBI:78527"/>
        <dbReference type="ChEBI" id="CHEBI:456215"/>
        <dbReference type="EC" id="6.1.1.21"/>
    </reaction>
</comment>
<comment type="subunit">
    <text evidence="1">Homodimer.</text>
</comment>
<comment type="subcellular location">
    <subcellularLocation>
        <location evidence="1">Cytoplasm</location>
    </subcellularLocation>
</comment>
<comment type="similarity">
    <text evidence="1">Belongs to the class-II aminoacyl-tRNA synthetase family.</text>
</comment>
<accession>C0MGD4</accession>